<organism>
    <name type="scientific">Momordica charantia</name>
    <name type="common">Bitter gourd</name>
    <name type="synonym">Balsam pear</name>
    <dbReference type="NCBI Taxonomy" id="3673"/>
    <lineage>
        <taxon>Eukaryota</taxon>
        <taxon>Viridiplantae</taxon>
        <taxon>Streptophyta</taxon>
        <taxon>Embryophyta</taxon>
        <taxon>Tracheophyta</taxon>
        <taxon>Spermatophyta</taxon>
        <taxon>Magnoliopsida</taxon>
        <taxon>eudicotyledons</taxon>
        <taxon>Gunneridae</taxon>
        <taxon>Pentapetalae</taxon>
        <taxon>rosids</taxon>
        <taxon>fabids</taxon>
        <taxon>Cucurbitales</taxon>
        <taxon>Cucurbitaceae</taxon>
        <taxon>Momordiceae</taxon>
        <taxon>Momordica</taxon>
    </lineage>
</organism>
<name>ITR3_MOMCH</name>
<dbReference type="SMR" id="Q9S747"/>
<dbReference type="Proteomes" id="UP000504603">
    <property type="component" value="Unplaced"/>
</dbReference>
<dbReference type="GO" id="GO:0005576">
    <property type="term" value="C:extracellular region"/>
    <property type="evidence" value="ECO:0007669"/>
    <property type="project" value="UniProtKB-SubCell"/>
</dbReference>
<dbReference type="GO" id="GO:0004867">
    <property type="term" value="F:serine-type endopeptidase inhibitor activity"/>
    <property type="evidence" value="ECO:0007669"/>
    <property type="project" value="UniProtKB-KW"/>
</dbReference>
<dbReference type="CDD" id="cd00150">
    <property type="entry name" value="PlantTI"/>
    <property type="match status" value="1"/>
</dbReference>
<dbReference type="Gene3D" id="4.10.75.20">
    <property type="match status" value="1"/>
</dbReference>
<dbReference type="InterPro" id="IPR000737">
    <property type="entry name" value="Prot_inh_squash"/>
</dbReference>
<dbReference type="InterPro" id="IPR011052">
    <property type="entry name" value="Proteinase_amylase_inhib_sf"/>
</dbReference>
<dbReference type="Pfam" id="PF00299">
    <property type="entry name" value="Squash"/>
    <property type="match status" value="1"/>
</dbReference>
<dbReference type="SMART" id="SM00286">
    <property type="entry name" value="PTI"/>
    <property type="match status" value="1"/>
</dbReference>
<dbReference type="SUPFAM" id="SSF57027">
    <property type="entry name" value="Plant inhibitors of proteinases and amylases"/>
    <property type="match status" value="1"/>
</dbReference>
<dbReference type="PROSITE" id="PS00286">
    <property type="entry name" value="SQUASH_INHIBITOR"/>
    <property type="match status" value="1"/>
</dbReference>
<protein>
    <recommendedName>
        <fullName>Trypsin inhibitor 3</fullName>
    </recommendedName>
    <alternativeName>
        <fullName>MCTI-III</fullName>
    </alternativeName>
    <alternativeName>
        <fullName>Trypsin inhibitor III</fullName>
    </alternativeName>
</protein>
<keyword id="KW-0903">Direct protein sequencing</keyword>
<keyword id="KW-1015">Disulfide bond</keyword>
<keyword id="KW-0960">Knottin</keyword>
<keyword id="KW-0646">Protease inhibitor</keyword>
<keyword id="KW-1185">Reference proteome</keyword>
<keyword id="KW-0964">Secreted</keyword>
<keyword id="KW-0722">Serine protease inhibitor</keyword>
<reference key="1">
    <citation type="journal article" date="1994" name="J. Biochem.">
        <title>Inhibition of serine proteases of the blood coagulation system by squash family protease inhibitors.</title>
        <authorList>
            <person name="Hayashi K."/>
            <person name="Takehisa T."/>
            <person name="Hamato N."/>
            <person name="Takano R."/>
            <person name="Hara S."/>
            <person name="Miyata T."/>
            <person name="Kato H."/>
        </authorList>
    </citation>
    <scope>PROTEIN SEQUENCE</scope>
</reference>
<reference key="2">
    <citation type="journal article" date="1995" name="J. Biochem.">
        <title>Trypsin and elastase inhibitors from bitter gourd (Momordica charantia LINN.) seeds: purification, amino acid sequences, and inhibitory activities of four new inhibitors.</title>
        <authorList>
            <person name="Hamato N."/>
            <person name="Koshiba T."/>
            <person name="Pham T.N."/>
            <person name="Tatsumi Y."/>
            <person name="Nakamura D."/>
            <person name="Takano R."/>
            <person name="Hayashi K."/>
            <person name="Hong Y.M."/>
            <person name="Hara S."/>
        </authorList>
    </citation>
    <scope>PROTEIN SEQUENCE</scope>
</reference>
<proteinExistence type="evidence at protein level"/>
<accession>Q9S747</accession>
<comment type="function">
    <text>Inhibits trypsin.</text>
</comment>
<comment type="subcellular location">
    <subcellularLocation>
        <location>Secreted</location>
    </subcellularLocation>
</comment>
<comment type="domain">
    <text evidence="1">The presence of a 'disulfide through disulfide knot' structurally defines this protein as a knottin.</text>
</comment>
<comment type="similarity">
    <text evidence="2">Belongs to the protease inhibitor I7 (squash-type serine protease inhibitor) family.</text>
</comment>
<feature type="peptide" id="PRO_0000044388" description="Trypsin inhibitor 3">
    <location>
        <begin position="1"/>
        <end position="30"/>
    </location>
</feature>
<feature type="site" description="Reactive bond">
    <location>
        <begin position="6"/>
        <end position="7"/>
    </location>
</feature>
<feature type="disulfide bond" evidence="1">
    <location>
        <begin position="4"/>
        <end position="21"/>
    </location>
</feature>
<feature type="disulfide bond" evidence="1">
    <location>
        <begin position="11"/>
        <end position="23"/>
    </location>
</feature>
<feature type="disulfide bond" evidence="1">
    <location>
        <begin position="17"/>
        <end position="29"/>
    </location>
</feature>
<sequence>ERGCPRILKQCKQDSDCPGECICMAHGFCG</sequence>
<evidence type="ECO:0000250" key="1"/>
<evidence type="ECO:0000305" key="2"/>